<keyword id="KW-0997">Cell inner membrane</keyword>
<keyword id="KW-1003">Cell membrane</keyword>
<keyword id="KW-0460">Magnesium</keyword>
<keyword id="KW-0472">Membrane</keyword>
<keyword id="KW-1185">Reference proteome</keyword>
<keyword id="KW-0808">Transferase</keyword>
<keyword id="KW-0812">Transmembrane</keyword>
<keyword id="KW-1133">Transmembrane helix</keyword>
<keyword id="KW-0831">Ubiquinone biosynthesis</keyword>
<dbReference type="EC" id="2.5.1.39" evidence="1"/>
<dbReference type="EMBL" id="CP000103">
    <property type="protein sequence ID" value="ABB75898.1"/>
    <property type="molecule type" value="Genomic_DNA"/>
</dbReference>
<dbReference type="RefSeq" id="WP_011381895.1">
    <property type="nucleotide sequence ID" value="NC_007614.1"/>
</dbReference>
<dbReference type="SMR" id="Q2Y5S3"/>
<dbReference type="STRING" id="323848.Nmul_A2611"/>
<dbReference type="KEGG" id="nmu:Nmul_A2611"/>
<dbReference type="eggNOG" id="COG0382">
    <property type="taxonomic scope" value="Bacteria"/>
</dbReference>
<dbReference type="HOGENOM" id="CLU_034879_1_0_4"/>
<dbReference type="OrthoDB" id="9782418at2"/>
<dbReference type="UniPathway" id="UPA00232"/>
<dbReference type="Proteomes" id="UP000002718">
    <property type="component" value="Chromosome"/>
</dbReference>
<dbReference type="GO" id="GO:0005886">
    <property type="term" value="C:plasma membrane"/>
    <property type="evidence" value="ECO:0007669"/>
    <property type="project" value="UniProtKB-SubCell"/>
</dbReference>
<dbReference type="GO" id="GO:0008412">
    <property type="term" value="F:4-hydroxybenzoate polyprenyltransferase activity"/>
    <property type="evidence" value="ECO:0007669"/>
    <property type="project" value="UniProtKB-UniRule"/>
</dbReference>
<dbReference type="GO" id="GO:0006744">
    <property type="term" value="P:ubiquinone biosynthetic process"/>
    <property type="evidence" value="ECO:0007669"/>
    <property type="project" value="UniProtKB-UniRule"/>
</dbReference>
<dbReference type="CDD" id="cd13959">
    <property type="entry name" value="PT_UbiA_COQ2"/>
    <property type="match status" value="1"/>
</dbReference>
<dbReference type="FunFam" id="1.10.357.140:FF:000002">
    <property type="entry name" value="4-hydroxybenzoate octaprenyltransferase"/>
    <property type="match status" value="1"/>
</dbReference>
<dbReference type="FunFam" id="1.20.120.1780:FF:000001">
    <property type="entry name" value="4-hydroxybenzoate octaprenyltransferase"/>
    <property type="match status" value="1"/>
</dbReference>
<dbReference type="Gene3D" id="1.10.357.140">
    <property type="entry name" value="UbiA prenyltransferase"/>
    <property type="match status" value="1"/>
</dbReference>
<dbReference type="Gene3D" id="1.20.120.1780">
    <property type="entry name" value="UbiA prenyltransferase"/>
    <property type="match status" value="1"/>
</dbReference>
<dbReference type="HAMAP" id="MF_01635">
    <property type="entry name" value="UbiA"/>
    <property type="match status" value="1"/>
</dbReference>
<dbReference type="InterPro" id="IPR006370">
    <property type="entry name" value="HB_polyprenyltransferase-like"/>
</dbReference>
<dbReference type="InterPro" id="IPR039653">
    <property type="entry name" value="Prenyltransferase"/>
</dbReference>
<dbReference type="InterPro" id="IPR000537">
    <property type="entry name" value="UbiA_prenyltransferase"/>
</dbReference>
<dbReference type="InterPro" id="IPR030470">
    <property type="entry name" value="UbiA_prenylTrfase_CS"/>
</dbReference>
<dbReference type="InterPro" id="IPR044878">
    <property type="entry name" value="UbiA_sf"/>
</dbReference>
<dbReference type="NCBIfam" id="TIGR01474">
    <property type="entry name" value="ubiA_proteo"/>
    <property type="match status" value="1"/>
</dbReference>
<dbReference type="PANTHER" id="PTHR11048:SF28">
    <property type="entry name" value="4-HYDROXYBENZOATE POLYPRENYLTRANSFERASE, MITOCHONDRIAL"/>
    <property type="match status" value="1"/>
</dbReference>
<dbReference type="PANTHER" id="PTHR11048">
    <property type="entry name" value="PRENYLTRANSFERASES"/>
    <property type="match status" value="1"/>
</dbReference>
<dbReference type="Pfam" id="PF01040">
    <property type="entry name" value="UbiA"/>
    <property type="match status" value="1"/>
</dbReference>
<dbReference type="PROSITE" id="PS00943">
    <property type="entry name" value="UBIA"/>
    <property type="match status" value="1"/>
</dbReference>
<proteinExistence type="inferred from homology"/>
<protein>
    <recommendedName>
        <fullName evidence="1">4-hydroxybenzoate octaprenyltransferase</fullName>
        <ecNumber evidence="1">2.5.1.39</ecNumber>
    </recommendedName>
    <alternativeName>
        <fullName evidence="1">4-HB polyprenyltransferase</fullName>
    </alternativeName>
</protein>
<organism>
    <name type="scientific">Nitrosospira multiformis (strain ATCC 25196 / NCIMB 11849 / C 71)</name>
    <dbReference type="NCBI Taxonomy" id="323848"/>
    <lineage>
        <taxon>Bacteria</taxon>
        <taxon>Pseudomonadati</taxon>
        <taxon>Pseudomonadota</taxon>
        <taxon>Betaproteobacteria</taxon>
        <taxon>Nitrosomonadales</taxon>
        <taxon>Nitrosomonadaceae</taxon>
        <taxon>Nitrosospira</taxon>
    </lineage>
</organism>
<gene>
    <name evidence="1" type="primary">ubiA</name>
    <name type="ordered locus">Nmul_A2611</name>
</gene>
<name>UBIA_NITMU</name>
<accession>Q2Y5S3</accession>
<reference key="1">
    <citation type="submission" date="2005-08" db="EMBL/GenBank/DDBJ databases">
        <title>Complete sequence of chromosome 1 of Nitrosospira multiformis ATCC 25196.</title>
        <authorList>
            <person name="Copeland A."/>
            <person name="Lucas S."/>
            <person name="Lapidus A."/>
            <person name="Barry K."/>
            <person name="Detter J.C."/>
            <person name="Glavina T."/>
            <person name="Hammon N."/>
            <person name="Israni S."/>
            <person name="Pitluck S."/>
            <person name="Chain P."/>
            <person name="Malfatti S."/>
            <person name="Shin M."/>
            <person name="Vergez L."/>
            <person name="Schmutz J."/>
            <person name="Larimer F."/>
            <person name="Land M."/>
            <person name="Hauser L."/>
            <person name="Kyrpides N."/>
            <person name="Lykidis A."/>
            <person name="Richardson P."/>
        </authorList>
    </citation>
    <scope>NUCLEOTIDE SEQUENCE [LARGE SCALE GENOMIC DNA]</scope>
    <source>
        <strain>ATCC 25196 / NCIMB 11849 / C 71</strain>
    </source>
</reference>
<sequence length="290" mass="32239">MTLTQRLVHYEKLMRLDKPIGILLLLWPTLWGLWLAAEGVPRLDILLIFVLGTVLMRSAGCVVNDYADRNFDGHVERTRTRPLALGAVSTREALLLAAGLSLVAFLLIQPLNRLTIELSFVALFLAASYPFTKRFFAMPQAYLGIAFSFGIPMAFAAQTGEVPFPAWFLMGANLLWVIAYDTEYAMVDKVDDLRIGIKTSAITFGRFDVVGVVLCHMAFLAGMVAIGLLQNLGVIYYIGLATALGLILYQYRLIHDRDRARCFKAFLHNNWVGATIFAGIVLDYLVRAAS</sequence>
<feature type="chain" id="PRO_0000262813" description="4-hydroxybenzoate octaprenyltransferase">
    <location>
        <begin position="1"/>
        <end position="290"/>
    </location>
</feature>
<feature type="transmembrane region" description="Helical" evidence="1">
    <location>
        <begin position="20"/>
        <end position="40"/>
    </location>
</feature>
<feature type="transmembrane region" description="Helical" evidence="1">
    <location>
        <begin position="43"/>
        <end position="63"/>
    </location>
</feature>
<feature type="transmembrane region" description="Helical" evidence="1">
    <location>
        <begin position="92"/>
        <end position="112"/>
    </location>
</feature>
<feature type="transmembrane region" description="Helical" evidence="1">
    <location>
        <begin position="114"/>
        <end position="131"/>
    </location>
</feature>
<feature type="transmembrane region" description="Helical" evidence="1">
    <location>
        <begin position="135"/>
        <end position="155"/>
    </location>
</feature>
<feature type="transmembrane region" description="Helical" evidence="1">
    <location>
        <begin position="160"/>
        <end position="180"/>
    </location>
</feature>
<feature type="transmembrane region" description="Helical" evidence="1">
    <location>
        <begin position="209"/>
        <end position="229"/>
    </location>
</feature>
<feature type="transmembrane region" description="Helical" evidence="1">
    <location>
        <begin position="231"/>
        <end position="251"/>
    </location>
</feature>
<feature type="transmembrane region" description="Helical" evidence="1">
    <location>
        <begin position="266"/>
        <end position="286"/>
    </location>
</feature>
<evidence type="ECO:0000255" key="1">
    <source>
        <dbReference type="HAMAP-Rule" id="MF_01635"/>
    </source>
</evidence>
<comment type="function">
    <text evidence="1">Catalyzes the prenylation of para-hydroxybenzoate (PHB) with an all-trans polyprenyl group. Mediates the second step in the final reaction sequence of ubiquinone-8 (UQ-8) biosynthesis, which is the condensation of the polyisoprenoid side chain with PHB, generating the first membrane-bound Q intermediate 3-octaprenyl-4-hydroxybenzoate.</text>
</comment>
<comment type="catalytic activity">
    <reaction evidence="1">
        <text>all-trans-octaprenyl diphosphate + 4-hydroxybenzoate = 4-hydroxy-3-(all-trans-octaprenyl)benzoate + diphosphate</text>
        <dbReference type="Rhea" id="RHEA:27782"/>
        <dbReference type="ChEBI" id="CHEBI:1617"/>
        <dbReference type="ChEBI" id="CHEBI:17879"/>
        <dbReference type="ChEBI" id="CHEBI:33019"/>
        <dbReference type="ChEBI" id="CHEBI:57711"/>
        <dbReference type="EC" id="2.5.1.39"/>
    </reaction>
</comment>
<comment type="cofactor">
    <cofactor evidence="1">
        <name>Mg(2+)</name>
        <dbReference type="ChEBI" id="CHEBI:18420"/>
    </cofactor>
</comment>
<comment type="pathway">
    <text evidence="1">Cofactor biosynthesis; ubiquinone biosynthesis.</text>
</comment>
<comment type="subcellular location">
    <subcellularLocation>
        <location evidence="1">Cell inner membrane</location>
        <topology evidence="1">Multi-pass membrane protein</topology>
    </subcellularLocation>
</comment>
<comment type="similarity">
    <text evidence="1">Belongs to the UbiA prenyltransferase family.</text>
</comment>